<sequence length="11" mass="1387">QTFQYSRGWTN</sequence>
<proteinExistence type="evidence at protein level"/>
<reference evidence="5" key="1">
    <citation type="journal article" date="2012" name="Syst. Biol.">
        <title>Peptidomics-based phylogeny and biogeography of Mantophasmatodea (Hexapoda).</title>
        <authorList>
            <person name="Predel R."/>
            <person name="Neupert S."/>
            <person name="Huetteroth W."/>
            <person name="Kahnt J."/>
            <person name="Waidelich D."/>
            <person name="Roth S."/>
        </authorList>
    </citation>
    <scope>PROTEIN SEQUENCE</scope>
    <scope>PYROGLUTAMATE FORMATION AT GLN-1</scope>
    <scope>AMIDATION AT ASN-11</scope>
    <source>
        <tissue evidence="3">Corpora cardiaca</tissue>
    </source>
</reference>
<feature type="peptide" id="PRO_0000420737" description="Corazonin" evidence="3">
    <location>
        <begin position="1"/>
        <end position="11"/>
    </location>
</feature>
<feature type="modified residue" description="Pyrrolidone carboxylic acid" evidence="3">
    <location>
        <position position="1"/>
    </location>
</feature>
<feature type="modified residue" description="Asparagine amide" evidence="3">
    <location>
        <position position="11"/>
    </location>
</feature>
<comment type="function">
    <text evidence="1">Cardioactive peptide. Corazonin is probably involved in the physiological regulation of the heart beat (By similarity).</text>
</comment>
<comment type="subcellular location">
    <subcellularLocation>
        <location evidence="6">Secreted</location>
    </subcellularLocation>
</comment>
<comment type="similarity">
    <text evidence="2">Belongs to the corazonin family.</text>
</comment>
<organism>
    <name type="scientific">Striatophasma naukluftense</name>
    <name type="common">Gladiator</name>
    <name type="synonym">Heel-walker</name>
    <dbReference type="NCBI Taxonomy" id="1041429"/>
    <lineage>
        <taxon>Eukaryota</taxon>
        <taxon>Metazoa</taxon>
        <taxon>Ecdysozoa</taxon>
        <taxon>Arthropoda</taxon>
        <taxon>Hexapoda</taxon>
        <taxon>Insecta</taxon>
        <taxon>Pterygota</taxon>
        <taxon>Neoptera</taxon>
        <taxon>Polyneoptera</taxon>
        <taxon>Mantophasmatodea</taxon>
        <taxon>Austrophasmatidae</taxon>
        <taxon>Striatophasma</taxon>
    </lineage>
</organism>
<accession>B0M3C2</accession>
<evidence type="ECO:0000250" key="1">
    <source>
        <dbReference type="UniProtKB" id="Q26377"/>
    </source>
</evidence>
<evidence type="ECO:0000255" key="2"/>
<evidence type="ECO:0000269" key="3">
    <source>
    </source>
</evidence>
<evidence type="ECO:0000303" key="4">
    <source>
    </source>
</evidence>
<evidence type="ECO:0000305" key="5"/>
<evidence type="ECO:0000305" key="6">
    <source>
    </source>
</evidence>
<name>CORZ_STRNA</name>
<protein>
    <recommendedName>
        <fullName evidence="4">Corazonin</fullName>
    </recommendedName>
</protein>
<dbReference type="GO" id="GO:0005576">
    <property type="term" value="C:extracellular region"/>
    <property type="evidence" value="ECO:0007669"/>
    <property type="project" value="UniProtKB-SubCell"/>
</dbReference>
<dbReference type="GO" id="GO:0007218">
    <property type="term" value="P:neuropeptide signaling pathway"/>
    <property type="evidence" value="ECO:0007669"/>
    <property type="project" value="UniProtKB-KW"/>
</dbReference>
<keyword id="KW-0027">Amidation</keyword>
<keyword id="KW-0903">Direct protein sequencing</keyword>
<keyword id="KW-0527">Neuropeptide</keyword>
<keyword id="KW-0873">Pyrrolidone carboxylic acid</keyword>
<keyword id="KW-0964">Secreted</keyword>